<feature type="chain" id="PRO_0000321325" description="Argininosuccinate synthase">
    <location>
        <begin position="1"/>
        <end position="412"/>
    </location>
</feature>
<feature type="binding site" evidence="1">
    <location>
        <begin position="11"/>
        <end position="19"/>
    </location>
    <ligand>
        <name>ATP</name>
        <dbReference type="ChEBI" id="CHEBI:30616"/>
    </ligand>
</feature>
<feature type="binding site" evidence="1">
    <location>
        <position position="37"/>
    </location>
    <ligand>
        <name>ATP</name>
        <dbReference type="ChEBI" id="CHEBI:30616"/>
    </ligand>
</feature>
<feature type="binding site" evidence="1">
    <location>
        <position position="88"/>
    </location>
    <ligand>
        <name>L-citrulline</name>
        <dbReference type="ChEBI" id="CHEBI:57743"/>
    </ligand>
</feature>
<feature type="binding site" evidence="1">
    <location>
        <position position="93"/>
    </location>
    <ligand>
        <name>L-citrulline</name>
        <dbReference type="ChEBI" id="CHEBI:57743"/>
    </ligand>
</feature>
<feature type="binding site" evidence="1">
    <location>
        <begin position="116"/>
        <end position="124"/>
    </location>
    <ligand>
        <name>ATP</name>
        <dbReference type="ChEBI" id="CHEBI:30616"/>
    </ligand>
</feature>
<feature type="binding site" evidence="1">
    <location>
        <position position="120"/>
    </location>
    <ligand>
        <name>L-aspartate</name>
        <dbReference type="ChEBI" id="CHEBI:29991"/>
    </ligand>
</feature>
<feature type="binding site" evidence="1">
    <location>
        <position position="124"/>
    </location>
    <ligand>
        <name>L-aspartate</name>
        <dbReference type="ChEBI" id="CHEBI:29991"/>
    </ligand>
</feature>
<feature type="binding site" evidence="1">
    <location>
        <position position="124"/>
    </location>
    <ligand>
        <name>L-citrulline</name>
        <dbReference type="ChEBI" id="CHEBI:57743"/>
    </ligand>
</feature>
<feature type="binding site" evidence="1">
    <location>
        <position position="125"/>
    </location>
    <ligand>
        <name>L-aspartate</name>
        <dbReference type="ChEBI" id="CHEBI:29991"/>
    </ligand>
</feature>
<feature type="binding site" evidence="1">
    <location>
        <position position="128"/>
    </location>
    <ligand>
        <name>L-citrulline</name>
        <dbReference type="ChEBI" id="CHEBI:57743"/>
    </ligand>
</feature>
<feature type="binding site" evidence="1">
    <location>
        <position position="181"/>
    </location>
    <ligand>
        <name>L-citrulline</name>
        <dbReference type="ChEBI" id="CHEBI:57743"/>
    </ligand>
</feature>
<feature type="binding site" evidence="1">
    <location>
        <position position="190"/>
    </location>
    <ligand>
        <name>L-citrulline</name>
        <dbReference type="ChEBI" id="CHEBI:57743"/>
    </ligand>
</feature>
<feature type="binding site" evidence="1">
    <location>
        <position position="271"/>
    </location>
    <ligand>
        <name>L-citrulline</name>
        <dbReference type="ChEBI" id="CHEBI:57743"/>
    </ligand>
</feature>
<feature type="binding site" evidence="1">
    <location>
        <position position="283"/>
    </location>
    <ligand>
        <name>L-citrulline</name>
        <dbReference type="ChEBI" id="CHEBI:57743"/>
    </ligand>
</feature>
<protein>
    <recommendedName>
        <fullName evidence="2">Argininosuccinate synthase</fullName>
        <ecNumber evidence="1">6.3.4.5</ecNumber>
    </recommendedName>
    <alternativeName>
        <fullName>Citrulline--aspartate ligase</fullName>
    </alternativeName>
</protein>
<reference key="1">
    <citation type="submission" date="2004-12" db="EMBL/GenBank/DDBJ databases">
        <authorList>
            <consortium name="NIH - Xenopus Gene Collection (XGC) project"/>
        </authorList>
    </citation>
    <scope>NUCLEOTIDE SEQUENCE [LARGE SCALE MRNA]</scope>
</reference>
<name>ASSY_XENTR</name>
<sequence length="412" mass="46851">MSQSKGMVVLAYSGGLDTSCILVWLKEQGYDVIAYLANIGQNEDFEAARKKAVNLGAKKVYIEDMRQQFVEEYIWPAVQANAIYEDRYLLGTSLARPCIAKKQVEIAKKEAAEYVSHGATGKGNDQIRFELTCYALYPEVKIIAPWRMPEFYNRFRGRSDLMEYAKKHNIPVPVTPKDPWSMDENIMHISYEGGILENPKNHAPPGLYLKTKNPATSPNEPDILEIEFKKGVPVKVTNTKEKTQHSSALGLFCYLNEVAGKHGVGRIDIVENRFIGMKSRGIYETPAGTILYQAHLDVEAFTMDREVRKIKQHLSQRFAEQIYNGFWYSPECEFVRSCITKSQEMVEGKVLVSVLKGQVYVLGREAPHSLYNEELVSMDVQGDYDPADACGFIRINALRLKEFHRLQKSKKN</sequence>
<accession>Q5M8Z6</accession>
<keyword id="KW-0028">Amino-acid biosynthesis</keyword>
<keyword id="KW-0055">Arginine biosynthesis</keyword>
<keyword id="KW-0067">ATP-binding</keyword>
<keyword id="KW-0963">Cytoplasm</keyword>
<keyword id="KW-0436">Ligase</keyword>
<keyword id="KW-0547">Nucleotide-binding</keyword>
<keyword id="KW-0597">Phosphoprotein</keyword>
<keyword id="KW-1185">Reference proteome</keyword>
<keyword id="KW-0835">Urea cycle</keyword>
<gene>
    <name evidence="1" type="primary">ass1</name>
</gene>
<organism>
    <name type="scientific">Xenopus tropicalis</name>
    <name type="common">Western clawed frog</name>
    <name type="synonym">Silurana tropicalis</name>
    <dbReference type="NCBI Taxonomy" id="8364"/>
    <lineage>
        <taxon>Eukaryota</taxon>
        <taxon>Metazoa</taxon>
        <taxon>Chordata</taxon>
        <taxon>Craniata</taxon>
        <taxon>Vertebrata</taxon>
        <taxon>Euteleostomi</taxon>
        <taxon>Amphibia</taxon>
        <taxon>Batrachia</taxon>
        <taxon>Anura</taxon>
        <taxon>Pipoidea</taxon>
        <taxon>Pipidae</taxon>
        <taxon>Xenopodinae</taxon>
        <taxon>Xenopus</taxon>
        <taxon>Silurana</taxon>
    </lineage>
</organism>
<comment type="function">
    <text evidence="1">One of the enzymes of the urea cycle, the metabolic pathway transforming neurotoxic amonia produced by protein catabolism into inocuous urea in the liver of ureotelic animals. Catalyzes the formation of arginosuccinate from aspartate, citrulline and ATP and together with ASL it is responsible for the biosynthesis of arginine in most body tissues.</text>
</comment>
<comment type="catalytic activity">
    <reaction evidence="1">
        <text>L-citrulline + L-aspartate + ATP = 2-(N(omega)-L-arginino)succinate + AMP + diphosphate + H(+)</text>
        <dbReference type="Rhea" id="RHEA:10932"/>
        <dbReference type="ChEBI" id="CHEBI:15378"/>
        <dbReference type="ChEBI" id="CHEBI:29991"/>
        <dbReference type="ChEBI" id="CHEBI:30616"/>
        <dbReference type="ChEBI" id="CHEBI:33019"/>
        <dbReference type="ChEBI" id="CHEBI:57472"/>
        <dbReference type="ChEBI" id="CHEBI:57743"/>
        <dbReference type="ChEBI" id="CHEBI:456215"/>
        <dbReference type="EC" id="6.3.4.5"/>
    </reaction>
</comment>
<comment type="pathway">
    <text evidence="1">Amino-acid biosynthesis; L-arginine biosynthesis; L-arginine from L-ornithine and carbamoyl phosphate: step 2/3.</text>
</comment>
<comment type="pathway">
    <text evidence="1">Nitrogen metabolism; urea cycle; (N(omega)-L-arginino)succinate from L-aspartate and L-citrulline: step 1/1.</text>
</comment>
<comment type="subunit">
    <text evidence="1">Homotetramer.</text>
</comment>
<comment type="subcellular location">
    <subcellularLocation>
        <location evidence="1">Cytoplasm</location>
        <location evidence="1">Cytosol</location>
    </subcellularLocation>
</comment>
<comment type="similarity">
    <text evidence="2">Belongs to the argininosuccinate synthase family.</text>
</comment>
<proteinExistence type="evidence at transcript level"/>
<dbReference type="EC" id="6.3.4.5" evidence="1"/>
<dbReference type="EMBL" id="BC087767">
    <property type="protein sequence ID" value="AAH87767.1"/>
    <property type="molecule type" value="mRNA"/>
</dbReference>
<dbReference type="RefSeq" id="NP_001011212.1">
    <property type="nucleotide sequence ID" value="NM_001011212.1"/>
</dbReference>
<dbReference type="RefSeq" id="XP_031746264.1">
    <property type="nucleotide sequence ID" value="XM_031890404.1"/>
</dbReference>
<dbReference type="RefSeq" id="XP_031746265.1">
    <property type="nucleotide sequence ID" value="XM_031890405.1"/>
</dbReference>
<dbReference type="SMR" id="Q5M8Z6"/>
<dbReference type="FunCoup" id="Q5M8Z6">
    <property type="interactions" value="1198"/>
</dbReference>
<dbReference type="STRING" id="8364.ENSXETP00000011436"/>
<dbReference type="PaxDb" id="8364-ENSXETP00000060349"/>
<dbReference type="DNASU" id="496645"/>
<dbReference type="GeneID" id="496645"/>
<dbReference type="KEGG" id="xtr:496645"/>
<dbReference type="AGR" id="Xenbase:XB-GENE-977784"/>
<dbReference type="CTD" id="445"/>
<dbReference type="Xenbase" id="XB-GENE-977784">
    <property type="gene designation" value="ass1"/>
</dbReference>
<dbReference type="eggNOG" id="KOG1706">
    <property type="taxonomic scope" value="Eukaryota"/>
</dbReference>
<dbReference type="HOGENOM" id="CLU_032784_4_2_1"/>
<dbReference type="InParanoid" id="Q5M8Z6"/>
<dbReference type="OMA" id="ACGAFHI"/>
<dbReference type="OrthoDB" id="1688907at2759"/>
<dbReference type="UniPathway" id="UPA00068">
    <property type="reaction ID" value="UER00113"/>
</dbReference>
<dbReference type="UniPathway" id="UPA00158">
    <property type="reaction ID" value="UER00272"/>
</dbReference>
<dbReference type="Proteomes" id="UP000008143">
    <property type="component" value="Chromosome 8"/>
</dbReference>
<dbReference type="Bgee" id="ENSXETG00000001347">
    <property type="expression patterns" value="Expressed in liver and 10 other cell types or tissues"/>
</dbReference>
<dbReference type="GO" id="GO:0005829">
    <property type="term" value="C:cytosol"/>
    <property type="evidence" value="ECO:0007669"/>
    <property type="project" value="UniProtKB-SubCell"/>
</dbReference>
<dbReference type="GO" id="GO:0004055">
    <property type="term" value="F:argininosuccinate synthase activity"/>
    <property type="evidence" value="ECO:0000250"/>
    <property type="project" value="UniProtKB"/>
</dbReference>
<dbReference type="GO" id="GO:0005524">
    <property type="term" value="F:ATP binding"/>
    <property type="evidence" value="ECO:0007669"/>
    <property type="project" value="UniProtKB-KW"/>
</dbReference>
<dbReference type="GO" id="GO:0006526">
    <property type="term" value="P:L-arginine biosynthetic process"/>
    <property type="evidence" value="ECO:0000250"/>
    <property type="project" value="UniProtKB"/>
</dbReference>
<dbReference type="GO" id="GO:0000050">
    <property type="term" value="P:urea cycle"/>
    <property type="evidence" value="ECO:0000250"/>
    <property type="project" value="UniProtKB"/>
</dbReference>
<dbReference type="CDD" id="cd01999">
    <property type="entry name" value="ASS"/>
    <property type="match status" value="1"/>
</dbReference>
<dbReference type="FunFam" id="3.40.50.620:FF:000019">
    <property type="entry name" value="Argininosuccinate synthase"/>
    <property type="match status" value="1"/>
</dbReference>
<dbReference type="FunFam" id="3.90.1260.10:FF:000005">
    <property type="entry name" value="Argininosuccinate synthase 1"/>
    <property type="match status" value="1"/>
</dbReference>
<dbReference type="Gene3D" id="3.90.1260.10">
    <property type="entry name" value="Argininosuccinate synthetase, chain A, domain 2"/>
    <property type="match status" value="1"/>
</dbReference>
<dbReference type="Gene3D" id="3.40.50.620">
    <property type="entry name" value="HUPs"/>
    <property type="match status" value="1"/>
</dbReference>
<dbReference type="Gene3D" id="1.20.5.470">
    <property type="entry name" value="Single helix bin"/>
    <property type="match status" value="1"/>
</dbReference>
<dbReference type="HAMAP" id="MF_00005">
    <property type="entry name" value="Arg_succ_synth_type1"/>
    <property type="match status" value="1"/>
</dbReference>
<dbReference type="InterPro" id="IPR048268">
    <property type="entry name" value="Arginosuc_syn_C"/>
</dbReference>
<dbReference type="InterPro" id="IPR048267">
    <property type="entry name" value="Arginosuc_syn_N"/>
</dbReference>
<dbReference type="InterPro" id="IPR001518">
    <property type="entry name" value="Arginosuc_synth"/>
</dbReference>
<dbReference type="InterPro" id="IPR018223">
    <property type="entry name" value="Arginosuc_synth_CS"/>
</dbReference>
<dbReference type="InterPro" id="IPR023434">
    <property type="entry name" value="Arginosuc_synth_type_1_subfam"/>
</dbReference>
<dbReference type="InterPro" id="IPR024074">
    <property type="entry name" value="AS_cat/multimer_dom_body"/>
</dbReference>
<dbReference type="InterPro" id="IPR014729">
    <property type="entry name" value="Rossmann-like_a/b/a_fold"/>
</dbReference>
<dbReference type="NCBIfam" id="TIGR00032">
    <property type="entry name" value="argG"/>
    <property type="match status" value="1"/>
</dbReference>
<dbReference type="NCBIfam" id="NF001770">
    <property type="entry name" value="PRK00509.1"/>
    <property type="match status" value="1"/>
</dbReference>
<dbReference type="PANTHER" id="PTHR11587">
    <property type="entry name" value="ARGININOSUCCINATE SYNTHASE"/>
    <property type="match status" value="1"/>
</dbReference>
<dbReference type="PANTHER" id="PTHR11587:SF2">
    <property type="entry name" value="ARGININOSUCCINATE SYNTHASE"/>
    <property type="match status" value="1"/>
</dbReference>
<dbReference type="Pfam" id="PF20979">
    <property type="entry name" value="Arginosuc_syn_C"/>
    <property type="match status" value="1"/>
</dbReference>
<dbReference type="Pfam" id="PF00764">
    <property type="entry name" value="Arginosuc_synth"/>
    <property type="match status" value="1"/>
</dbReference>
<dbReference type="SUPFAM" id="SSF52402">
    <property type="entry name" value="Adenine nucleotide alpha hydrolases-like"/>
    <property type="match status" value="1"/>
</dbReference>
<dbReference type="SUPFAM" id="SSF69864">
    <property type="entry name" value="Argininosuccinate synthetase, C-terminal domain"/>
    <property type="match status" value="1"/>
</dbReference>
<dbReference type="PROSITE" id="PS00564">
    <property type="entry name" value="ARGININOSUCCIN_SYN_1"/>
    <property type="match status" value="1"/>
</dbReference>
<dbReference type="PROSITE" id="PS00565">
    <property type="entry name" value="ARGININOSUCCIN_SYN_2"/>
    <property type="match status" value="1"/>
</dbReference>
<evidence type="ECO:0000250" key="1">
    <source>
        <dbReference type="UniProtKB" id="P00966"/>
    </source>
</evidence>
<evidence type="ECO:0000305" key="2"/>